<proteinExistence type="evidence at protein level"/>
<evidence type="ECO:0000250" key="1">
    <source>
        <dbReference type="UniProtKB" id="P32378"/>
    </source>
</evidence>
<evidence type="ECO:0000255" key="2"/>
<evidence type="ECO:0000255" key="3">
    <source>
        <dbReference type="PROSITE-ProRule" id="PRU00498"/>
    </source>
</evidence>
<evidence type="ECO:0000269" key="4">
    <source>
    </source>
</evidence>
<evidence type="ECO:0000303" key="5">
    <source>
    </source>
</evidence>
<evidence type="ECO:0000305" key="6"/>
<gene>
    <name evidence="5" type="primary">dpasC</name>
</gene>
<accession>P9WEX2</accession>
<organism>
    <name type="scientific">Apiospora sacchari</name>
    <name type="common">Arthrinium sacchari</name>
    <dbReference type="NCBI Taxonomy" id="166626"/>
    <lineage>
        <taxon>Eukaryota</taxon>
        <taxon>Fungi</taxon>
        <taxon>Dikarya</taxon>
        <taxon>Ascomycota</taxon>
        <taxon>Pezizomycotina</taxon>
        <taxon>Sordariomycetes</taxon>
        <taxon>Xylariomycetidae</taxon>
        <taxon>Amphisphaeriales</taxon>
        <taxon>Apiosporaceae</taxon>
        <taxon>Apiospora</taxon>
    </lineage>
</organism>
<dbReference type="EC" id="2.5.1.-" evidence="4"/>
<dbReference type="SMR" id="P9WEX2"/>
<dbReference type="GlyCosmos" id="P9WEX2">
    <property type="glycosylation" value="1 site, No reported glycans"/>
</dbReference>
<dbReference type="UniPathway" id="UPA00213"/>
<dbReference type="GO" id="GO:0005886">
    <property type="term" value="C:plasma membrane"/>
    <property type="evidence" value="ECO:0007669"/>
    <property type="project" value="TreeGrafter"/>
</dbReference>
<dbReference type="GO" id="GO:0016765">
    <property type="term" value="F:transferase activity, transferring alkyl or aryl (other than methyl) groups"/>
    <property type="evidence" value="ECO:0007669"/>
    <property type="project" value="InterPro"/>
</dbReference>
<dbReference type="GO" id="GO:0016114">
    <property type="term" value="P:terpenoid biosynthetic process"/>
    <property type="evidence" value="ECO:0007669"/>
    <property type="project" value="UniProtKB-UniPathway"/>
</dbReference>
<dbReference type="CDD" id="cd13959">
    <property type="entry name" value="PT_UbiA_COQ2"/>
    <property type="match status" value="1"/>
</dbReference>
<dbReference type="FunFam" id="1.10.357.140:FF:000008">
    <property type="entry name" value="4-hydroxybenzoate octaprenyltransferase"/>
    <property type="match status" value="1"/>
</dbReference>
<dbReference type="FunFam" id="1.20.120.1780:FF:000001">
    <property type="entry name" value="4-hydroxybenzoate octaprenyltransferase"/>
    <property type="match status" value="1"/>
</dbReference>
<dbReference type="Gene3D" id="1.10.357.140">
    <property type="entry name" value="UbiA prenyltransferase"/>
    <property type="match status" value="1"/>
</dbReference>
<dbReference type="Gene3D" id="1.20.120.1780">
    <property type="entry name" value="UbiA prenyltransferase"/>
    <property type="match status" value="1"/>
</dbReference>
<dbReference type="InterPro" id="IPR039653">
    <property type="entry name" value="Prenyltransferase"/>
</dbReference>
<dbReference type="InterPro" id="IPR000537">
    <property type="entry name" value="UbiA_prenyltransferase"/>
</dbReference>
<dbReference type="InterPro" id="IPR030470">
    <property type="entry name" value="UbiA_prenylTrfase_CS"/>
</dbReference>
<dbReference type="InterPro" id="IPR044878">
    <property type="entry name" value="UbiA_sf"/>
</dbReference>
<dbReference type="PANTHER" id="PTHR11048:SF28">
    <property type="entry name" value="4-HYDROXYBENZOATE POLYPRENYLTRANSFERASE, MITOCHONDRIAL"/>
    <property type="match status" value="1"/>
</dbReference>
<dbReference type="PANTHER" id="PTHR11048">
    <property type="entry name" value="PRENYLTRANSFERASES"/>
    <property type="match status" value="1"/>
</dbReference>
<dbReference type="Pfam" id="PF01040">
    <property type="entry name" value="UbiA"/>
    <property type="match status" value="1"/>
</dbReference>
<dbReference type="PROSITE" id="PS00943">
    <property type="entry name" value="UBIA"/>
    <property type="match status" value="1"/>
</dbReference>
<protein>
    <recommendedName>
        <fullName evidence="5">Polyprenyl transferase dpasC</fullName>
        <ecNumber evidence="4">2.5.1.-</ecNumber>
    </recommendedName>
    <alternativeName>
        <fullName evidence="5">Diterpenoid pyrone biosynthesis cluster protein C</fullName>
    </alternativeName>
</protein>
<sequence length="336" mass="37916">MASVAKARSPKSTQSNSLVYDLLVLSRFTKYNPLFTIFAGGMFLFVASFPTTAFSCLLAGSTLVGNGSDVTLTWVFRQTALCLSACYSFCGAGMVWNDWIDRDIDANVARTKDRPLASGRVTTTQAMLWMVFQMAVSWWLLHFMLDGKDVNNHMLPVVIGSFLYPFGKRPICSKFYFYPQYILGFTIAWPAVPGRTAIFHGQETFAESVQACMPLLNMVFFWTIFLNTAYSYQDVVDDRKMGVNSFYNVLGKHVHLLLCLLLVPVAVCVPMYLNQFHSTWLWVSWAGVWALSLLRQITRFDEKNPASGGSLHVDNFLLGAWTVVACTIELLMRYYS</sequence>
<name>DPASC_APISA</name>
<comment type="function">
    <text evidence="4">Polyprenyl transferase; part of the gene cluster that mediates the biosynthesis of the diterpenoid pyrones subglutinols A and B (PubMed:32286350). The first step of the pathway is the synthesis of the alpha-pyrone moiety by the polyketide synthase dpasA via condensation of one acetyl-CoA starter unit with 3 malonyl-CoA units and 2 methylations (PubMed:32286350). The alpha-pyrone is then combined with geranylgeranyl pyrophosphate (GGPP) formed by the GGPP synthase dpasD through the action of the prenyltransferase dpasC to yield a linear alpha-pyrone diterpenoid (PubMed:32286350). Subsequent steps in the diterpenoid pyrone biosynthetic pathway involve the decalin core formation, which is initiated by the epoxidation of the C10-C11 olefin by the FAD-dependent oxidoreductase dpasE, and is followed by a cyclization cascade catalyzed by the terpene cyclase dpasB (PubMed:32286350). The FAD-linked oxidoreductase dpasF is then involved in tetrahydrofuran (THF) ring formation at the C5 unit to complete the formation of subglutinols A and B (PubMed:32286350). DpasF possesses also an additional catalytic ability of multi-step oxidations to generate a new DDP analog with an enone system at the C5 named FDDP A (PubMed:32286350).</text>
</comment>
<comment type="cofactor">
    <cofactor evidence="1">
        <name>Mg(2+)</name>
        <dbReference type="ChEBI" id="CHEBI:18420"/>
    </cofactor>
</comment>
<comment type="pathway">
    <text evidence="4">Secondary metabolite biosynthesis; terpenoid biosynthesis.</text>
</comment>
<comment type="subcellular location">
    <subcellularLocation>
        <location evidence="2">Membrane</location>
        <topology evidence="2">Multi-pass membrane protein</topology>
    </subcellularLocation>
</comment>
<comment type="biotechnology">
    <text evidence="4">Diterpenoid pyrones display various biological activities and subglutinol A shows insecticidal and anti-HIV activities.</text>
</comment>
<comment type="similarity">
    <text evidence="6">Belongs to the UbiA prenyltransferase family.</text>
</comment>
<keyword id="KW-0325">Glycoprotein</keyword>
<keyword id="KW-0472">Membrane</keyword>
<keyword id="KW-0808">Transferase</keyword>
<keyword id="KW-0812">Transmembrane</keyword>
<keyword id="KW-1133">Transmembrane helix</keyword>
<reference key="1">
    <citation type="journal article" date="2020" name="Nat. Commun.">
        <title>Synthetic biology based construction of biological activity-related library of fungal decalin-containing diterpenoid pyrones.</title>
        <authorList>
            <person name="Tsukada K."/>
            <person name="Shinki S."/>
            <person name="Kaneko A."/>
            <person name="Murakami K."/>
            <person name="Irie K."/>
            <person name="Murai M."/>
            <person name="Miyoshi H."/>
            <person name="Dan S."/>
            <person name="Kawaji K."/>
            <person name="Hayashi H."/>
            <person name="Kodama E.N."/>
            <person name="Hori A."/>
            <person name="Salim E."/>
            <person name="Kuraishi T."/>
            <person name="Hirata N."/>
            <person name="Kanda Y."/>
            <person name="Asai T."/>
        </authorList>
    </citation>
    <scope>NUCLEOTIDE SEQUENCE [GENOMIC DNA]</scope>
    <scope>FUNCTION</scope>
    <scope>CATALYTIC ACTIVITY</scope>
    <scope>PATHWAY</scope>
    <scope>BIOTECHNOLOGY</scope>
</reference>
<feature type="chain" id="PRO_0000451532" description="Polyprenyl transferase dpasC">
    <location>
        <begin position="1"/>
        <end position="336"/>
    </location>
</feature>
<feature type="transmembrane region" description="Helical" evidence="2">
    <location>
        <begin position="34"/>
        <end position="54"/>
    </location>
</feature>
<feature type="transmembrane region" description="Helical" evidence="2">
    <location>
        <begin position="80"/>
        <end position="100"/>
    </location>
</feature>
<feature type="transmembrane region" description="Helical" evidence="2">
    <location>
        <begin position="125"/>
        <end position="145"/>
    </location>
</feature>
<feature type="transmembrane region" description="Helical" evidence="2">
    <location>
        <begin position="181"/>
        <end position="201"/>
    </location>
</feature>
<feature type="transmembrane region" description="Helical" evidence="2">
    <location>
        <begin position="205"/>
        <end position="225"/>
    </location>
</feature>
<feature type="transmembrane region" description="Helical" evidence="2">
    <location>
        <begin position="253"/>
        <end position="273"/>
    </location>
</feature>
<feature type="transmembrane region" description="Helical" evidence="2">
    <location>
        <begin position="274"/>
        <end position="294"/>
    </location>
</feature>
<feature type="transmembrane region" description="Helical" evidence="2">
    <location>
        <begin position="311"/>
        <end position="331"/>
    </location>
</feature>
<feature type="glycosylation site" description="N-linked (GlcNAc...) asparagine" evidence="3">
    <location>
        <position position="66"/>
    </location>
</feature>